<sequence>MELVLKDAQSALEVSETTFGRDFNEALVHQVVVAYAANARQGTRAQKTRAEVVGSGKKPWRQKGTGRARAGTVKGPIWRGGGVTFAAKAQDHSQKVNKKMYRGALKSIFSELVRQDRLIVVESFGVEAPKTKELKAKLAEMNLEDVLIVTPEIDENLFLAARNLYKVDVRDVAGIDPVSLIAFNKVLVTADAVKQIEEMLG</sequence>
<accession>B1KMY2</accession>
<comment type="function">
    <text evidence="1">One of the primary rRNA binding proteins, this protein initially binds near the 5'-end of the 23S rRNA. It is important during the early stages of 50S assembly. It makes multiple contacts with different domains of the 23S rRNA in the assembled 50S subunit and ribosome.</text>
</comment>
<comment type="function">
    <text evidence="1">Forms part of the polypeptide exit tunnel.</text>
</comment>
<comment type="subunit">
    <text evidence="1">Part of the 50S ribosomal subunit.</text>
</comment>
<comment type="similarity">
    <text evidence="1">Belongs to the universal ribosomal protein uL4 family.</text>
</comment>
<evidence type="ECO:0000255" key="1">
    <source>
        <dbReference type="HAMAP-Rule" id="MF_01328"/>
    </source>
</evidence>
<evidence type="ECO:0000256" key="2">
    <source>
        <dbReference type="SAM" id="MobiDB-lite"/>
    </source>
</evidence>
<evidence type="ECO:0000305" key="3"/>
<proteinExistence type="inferred from homology"/>
<name>RL4_SHEWM</name>
<reference key="1">
    <citation type="submission" date="2008-02" db="EMBL/GenBank/DDBJ databases">
        <title>Complete sequence of Shewanella woodyi ATCC 51908.</title>
        <authorList>
            <consortium name="US DOE Joint Genome Institute"/>
            <person name="Copeland A."/>
            <person name="Lucas S."/>
            <person name="Lapidus A."/>
            <person name="Glavina del Rio T."/>
            <person name="Dalin E."/>
            <person name="Tice H."/>
            <person name="Bruce D."/>
            <person name="Goodwin L."/>
            <person name="Pitluck S."/>
            <person name="Sims D."/>
            <person name="Brettin T."/>
            <person name="Detter J.C."/>
            <person name="Han C."/>
            <person name="Kuske C.R."/>
            <person name="Schmutz J."/>
            <person name="Larimer F."/>
            <person name="Land M."/>
            <person name="Hauser L."/>
            <person name="Kyrpides N."/>
            <person name="Lykidis A."/>
            <person name="Zhao J.-S."/>
            <person name="Richardson P."/>
        </authorList>
    </citation>
    <scope>NUCLEOTIDE SEQUENCE [LARGE SCALE GENOMIC DNA]</scope>
    <source>
        <strain>ATCC 51908 / MS32</strain>
    </source>
</reference>
<dbReference type="EMBL" id="CP000961">
    <property type="protein sequence ID" value="ACA88939.1"/>
    <property type="molecule type" value="Genomic_DNA"/>
</dbReference>
<dbReference type="RefSeq" id="WP_012327259.1">
    <property type="nucleotide sequence ID" value="NC_010506.1"/>
</dbReference>
<dbReference type="SMR" id="B1KMY2"/>
<dbReference type="STRING" id="392500.Swoo_4689"/>
<dbReference type="KEGG" id="swd:Swoo_4689"/>
<dbReference type="eggNOG" id="COG0088">
    <property type="taxonomic scope" value="Bacteria"/>
</dbReference>
<dbReference type="HOGENOM" id="CLU_041575_5_2_6"/>
<dbReference type="Proteomes" id="UP000002168">
    <property type="component" value="Chromosome"/>
</dbReference>
<dbReference type="GO" id="GO:1990904">
    <property type="term" value="C:ribonucleoprotein complex"/>
    <property type="evidence" value="ECO:0007669"/>
    <property type="project" value="UniProtKB-KW"/>
</dbReference>
<dbReference type="GO" id="GO:0005840">
    <property type="term" value="C:ribosome"/>
    <property type="evidence" value="ECO:0007669"/>
    <property type="project" value="UniProtKB-KW"/>
</dbReference>
<dbReference type="GO" id="GO:0019843">
    <property type="term" value="F:rRNA binding"/>
    <property type="evidence" value="ECO:0007669"/>
    <property type="project" value="UniProtKB-UniRule"/>
</dbReference>
<dbReference type="GO" id="GO:0003735">
    <property type="term" value="F:structural constituent of ribosome"/>
    <property type="evidence" value="ECO:0007669"/>
    <property type="project" value="InterPro"/>
</dbReference>
<dbReference type="GO" id="GO:0006412">
    <property type="term" value="P:translation"/>
    <property type="evidence" value="ECO:0007669"/>
    <property type="project" value="UniProtKB-UniRule"/>
</dbReference>
<dbReference type="FunFam" id="3.40.1370.10:FF:000001">
    <property type="entry name" value="50S ribosomal protein L4"/>
    <property type="match status" value="1"/>
</dbReference>
<dbReference type="Gene3D" id="3.40.1370.10">
    <property type="match status" value="1"/>
</dbReference>
<dbReference type="HAMAP" id="MF_01328_B">
    <property type="entry name" value="Ribosomal_uL4_B"/>
    <property type="match status" value="1"/>
</dbReference>
<dbReference type="InterPro" id="IPR002136">
    <property type="entry name" value="Ribosomal_uL4"/>
</dbReference>
<dbReference type="InterPro" id="IPR013005">
    <property type="entry name" value="Ribosomal_uL4-like"/>
</dbReference>
<dbReference type="InterPro" id="IPR023574">
    <property type="entry name" value="Ribosomal_uL4_dom_sf"/>
</dbReference>
<dbReference type="NCBIfam" id="TIGR03953">
    <property type="entry name" value="rplD_bact"/>
    <property type="match status" value="1"/>
</dbReference>
<dbReference type="PANTHER" id="PTHR10746">
    <property type="entry name" value="50S RIBOSOMAL PROTEIN L4"/>
    <property type="match status" value="1"/>
</dbReference>
<dbReference type="PANTHER" id="PTHR10746:SF6">
    <property type="entry name" value="LARGE RIBOSOMAL SUBUNIT PROTEIN UL4M"/>
    <property type="match status" value="1"/>
</dbReference>
<dbReference type="Pfam" id="PF00573">
    <property type="entry name" value="Ribosomal_L4"/>
    <property type="match status" value="1"/>
</dbReference>
<dbReference type="SUPFAM" id="SSF52166">
    <property type="entry name" value="Ribosomal protein L4"/>
    <property type="match status" value="1"/>
</dbReference>
<protein>
    <recommendedName>
        <fullName evidence="1">Large ribosomal subunit protein uL4</fullName>
    </recommendedName>
    <alternativeName>
        <fullName evidence="3">50S ribosomal protein L4</fullName>
    </alternativeName>
</protein>
<organism>
    <name type="scientific">Shewanella woodyi (strain ATCC 51908 / MS32)</name>
    <dbReference type="NCBI Taxonomy" id="392500"/>
    <lineage>
        <taxon>Bacteria</taxon>
        <taxon>Pseudomonadati</taxon>
        <taxon>Pseudomonadota</taxon>
        <taxon>Gammaproteobacteria</taxon>
        <taxon>Alteromonadales</taxon>
        <taxon>Shewanellaceae</taxon>
        <taxon>Shewanella</taxon>
    </lineage>
</organism>
<keyword id="KW-1185">Reference proteome</keyword>
<keyword id="KW-0687">Ribonucleoprotein</keyword>
<keyword id="KW-0689">Ribosomal protein</keyword>
<keyword id="KW-0694">RNA-binding</keyword>
<keyword id="KW-0699">rRNA-binding</keyword>
<gene>
    <name evidence="1" type="primary">rplD</name>
    <name type="ordered locus">Swoo_4689</name>
</gene>
<feature type="chain" id="PRO_1000142187" description="Large ribosomal subunit protein uL4">
    <location>
        <begin position="1"/>
        <end position="201"/>
    </location>
</feature>
<feature type="region of interest" description="Disordered" evidence="2">
    <location>
        <begin position="46"/>
        <end position="71"/>
    </location>
</feature>